<keyword id="KW-0145">Chemotaxis</keyword>
<keyword id="KW-0963">Cytoplasm</keyword>
<keyword id="KW-0283">Flagellar rotation</keyword>
<keyword id="KW-0378">Hydrolase</keyword>
<keyword id="KW-0904">Protein phosphatase</keyword>
<evidence type="ECO:0000250" key="1"/>
<evidence type="ECO:0000256" key="2">
    <source>
        <dbReference type="SAM" id="MobiDB-lite"/>
    </source>
</evidence>
<evidence type="ECO:0000305" key="3"/>
<name>CHEZ_VIBPA</name>
<proteinExistence type="inferred from homology"/>
<protein>
    <recommendedName>
        <fullName>Protein phosphatase CheZ</fullName>
        <ecNumber>3.1.3.-</ecNumber>
    </recommendedName>
    <alternativeName>
        <fullName>Chemotaxis protein CheZ</fullName>
    </alternativeName>
</protein>
<dbReference type="EC" id="3.1.3.-"/>
<dbReference type="EMBL" id="AF069392">
    <property type="protein sequence ID" value="AAF32416.1"/>
    <property type="molecule type" value="Genomic_DNA"/>
</dbReference>
<dbReference type="EMBL" id="BA000031">
    <property type="protein sequence ID" value="BAC60493.1"/>
    <property type="molecule type" value="Genomic_DNA"/>
</dbReference>
<dbReference type="RefSeq" id="NP_798609.1">
    <property type="nucleotide sequence ID" value="NC_004603.1"/>
</dbReference>
<dbReference type="RefSeq" id="WP_005457755.1">
    <property type="nucleotide sequence ID" value="NC_004603.1"/>
</dbReference>
<dbReference type="SMR" id="Q9LB13"/>
<dbReference type="GeneID" id="1189743"/>
<dbReference type="KEGG" id="vpa:VP2230"/>
<dbReference type="PATRIC" id="fig|223926.6.peg.2133"/>
<dbReference type="eggNOG" id="COG3143">
    <property type="taxonomic scope" value="Bacteria"/>
</dbReference>
<dbReference type="HOGENOM" id="CLU_080718_0_0_6"/>
<dbReference type="Proteomes" id="UP000002493">
    <property type="component" value="Chromosome 1"/>
</dbReference>
<dbReference type="GO" id="GO:0009288">
    <property type="term" value="C:bacterial-type flagellum"/>
    <property type="evidence" value="ECO:0007669"/>
    <property type="project" value="InterPro"/>
</dbReference>
<dbReference type="GO" id="GO:0005737">
    <property type="term" value="C:cytoplasm"/>
    <property type="evidence" value="ECO:0007669"/>
    <property type="project" value="UniProtKB-SubCell"/>
</dbReference>
<dbReference type="GO" id="GO:0004721">
    <property type="term" value="F:phosphoprotein phosphatase activity"/>
    <property type="evidence" value="ECO:0007669"/>
    <property type="project" value="UniProtKB-KW"/>
</dbReference>
<dbReference type="GO" id="GO:0097588">
    <property type="term" value="P:archaeal or bacterial-type flagellum-dependent cell motility"/>
    <property type="evidence" value="ECO:0007669"/>
    <property type="project" value="UniProtKB-KW"/>
</dbReference>
<dbReference type="GO" id="GO:0006935">
    <property type="term" value="P:chemotaxis"/>
    <property type="evidence" value="ECO:0007669"/>
    <property type="project" value="UniProtKB-KW"/>
</dbReference>
<dbReference type="GO" id="GO:0050920">
    <property type="term" value="P:regulation of chemotaxis"/>
    <property type="evidence" value="ECO:0007669"/>
    <property type="project" value="InterPro"/>
</dbReference>
<dbReference type="Gene3D" id="1.10.287.500">
    <property type="entry name" value="Helix hairpin bin"/>
    <property type="match status" value="1"/>
</dbReference>
<dbReference type="InterPro" id="IPR007439">
    <property type="entry name" value="Chemotax_Pase_CheZ"/>
</dbReference>
<dbReference type="InterPro" id="IPR050992">
    <property type="entry name" value="CheZ_family_phosphatases"/>
</dbReference>
<dbReference type="PANTHER" id="PTHR43693">
    <property type="entry name" value="PROTEIN PHOSPHATASE CHEZ"/>
    <property type="match status" value="1"/>
</dbReference>
<dbReference type="PANTHER" id="PTHR43693:SF1">
    <property type="entry name" value="PROTEIN PHOSPHATASE CHEZ"/>
    <property type="match status" value="1"/>
</dbReference>
<dbReference type="Pfam" id="PF04344">
    <property type="entry name" value="CheZ"/>
    <property type="match status" value="1"/>
</dbReference>
<dbReference type="PIRSF" id="PIRSF002884">
    <property type="entry name" value="CheZ"/>
    <property type="match status" value="1"/>
</dbReference>
<dbReference type="SUPFAM" id="SSF75708">
    <property type="entry name" value="Chemotaxis phosphatase CheZ"/>
    <property type="match status" value="1"/>
</dbReference>
<feature type="chain" id="PRO_0000410787" description="Protein phosphatase CheZ">
    <location>
        <begin position="1"/>
        <end position="246"/>
    </location>
</feature>
<feature type="region of interest" description="Disordered" evidence="2">
    <location>
        <begin position="204"/>
        <end position="246"/>
    </location>
</feature>
<feature type="compositionally biased region" description="Basic and acidic residues" evidence="2">
    <location>
        <begin position="206"/>
        <end position="215"/>
    </location>
</feature>
<feature type="site" description="Enhances dephosphorylation of CheY-P" evidence="1">
    <location>
        <position position="168"/>
    </location>
</feature>
<reference key="1">
    <citation type="journal article" date="2000" name="J. Bacteriol.">
        <title>Insertional inactivation of genes encoding components of the sodium-type flagellar motor and switch of Vibrio parahaemolyticus.</title>
        <authorList>
            <person name="Boles B.R."/>
            <person name="McCarter L.L."/>
        </authorList>
    </citation>
    <scope>NUCLEOTIDE SEQUENCE [GENOMIC DNA]</scope>
    <source>
        <strain>BB22</strain>
    </source>
</reference>
<reference key="2">
    <citation type="journal article" date="2003" name="Lancet">
        <title>Genome sequence of Vibrio parahaemolyticus: a pathogenic mechanism distinct from that of V. cholerae.</title>
        <authorList>
            <person name="Makino K."/>
            <person name="Oshima K."/>
            <person name="Kurokawa K."/>
            <person name="Yokoyama K."/>
            <person name="Uda T."/>
            <person name="Tagomori K."/>
            <person name="Iijima Y."/>
            <person name="Najima M."/>
            <person name="Nakano M."/>
            <person name="Yamashita A."/>
            <person name="Kubota Y."/>
            <person name="Kimura S."/>
            <person name="Yasunaga T."/>
            <person name="Honda T."/>
            <person name="Shinagawa H."/>
            <person name="Hattori M."/>
            <person name="Iida T."/>
        </authorList>
    </citation>
    <scope>NUCLEOTIDE SEQUENCE [LARGE SCALE GENOMIC DNA]</scope>
    <source>
        <strain>RIMD 2210633</strain>
    </source>
</reference>
<gene>
    <name type="primary">cheZ</name>
    <name type="ordered locus">VP2230</name>
</gene>
<sequence length="246" mass="27782">MISLEQAKSLVQMLENGEQDQANMLVASLYEGTENPVLQEIGTLTRDLHDSLKQFNLDQRMTEIAKDEIPNARDRLHYVIEKTELAANKTMDAVDCCLPIADNLHDCLQQVRPQWNELMYGRIELSEFKALCHRIDKLLVQVEGDSTELRGQLTEILMAQDFQDLTGQIIRRVITLVNEVEGRLVEILTVFSGQKPAEQVQVLSEPADKKIKQSSEAEGPILHPELREDAVSSQDEVDDLLSSLGF</sequence>
<comment type="function">
    <text evidence="1">Plays an important role in bacterial chemotaxis signal transduction pathway by accelerating the dephosphorylation of phosphorylated CheY (CheY-P).</text>
</comment>
<comment type="subunit">
    <text evidence="1">Homodimer.</text>
</comment>
<comment type="subcellular location">
    <subcellularLocation>
        <location evidence="1">Cytoplasm</location>
    </subcellularLocation>
</comment>
<comment type="similarity">
    <text evidence="3">Belongs to the CheZ family.</text>
</comment>
<organism>
    <name type="scientific">Vibrio parahaemolyticus serotype O3:K6 (strain RIMD 2210633)</name>
    <dbReference type="NCBI Taxonomy" id="223926"/>
    <lineage>
        <taxon>Bacteria</taxon>
        <taxon>Pseudomonadati</taxon>
        <taxon>Pseudomonadota</taxon>
        <taxon>Gammaproteobacteria</taxon>
        <taxon>Vibrionales</taxon>
        <taxon>Vibrionaceae</taxon>
        <taxon>Vibrio</taxon>
    </lineage>
</organism>
<accession>Q9LB13</accession>